<feature type="chain" id="PRO_0000261439" description="Cdc42-interacting protein 4">
    <location>
        <begin position="1"/>
        <end position="603"/>
    </location>
</feature>
<feature type="domain" description="F-BAR" evidence="4">
    <location>
        <begin position="1"/>
        <end position="264"/>
    </location>
</feature>
<feature type="domain" description="REM-1" evidence="5">
    <location>
        <begin position="393"/>
        <end position="470"/>
    </location>
</feature>
<feature type="domain" description="SH3" evidence="3">
    <location>
        <begin position="542"/>
        <end position="603"/>
    </location>
</feature>
<feature type="region of interest" description="Required for podosome formation and interaction with AKAP9 and microtubules" evidence="1">
    <location>
        <begin position="1"/>
        <end position="117"/>
    </location>
</feature>
<feature type="region of interest" description="Required for translocation to the plasma membrane in response to insulin">
    <location>
        <begin position="1"/>
        <end position="117"/>
    </location>
</feature>
<feature type="region of interest" description="Interaction with PDE6G" evidence="1">
    <location>
        <begin position="293"/>
        <end position="603"/>
    </location>
</feature>
<feature type="region of interest" description="Interaction with CDC42" evidence="1">
    <location>
        <begin position="293"/>
        <end position="539"/>
    </location>
</feature>
<feature type="region of interest" description="Disordered" evidence="6">
    <location>
        <begin position="295"/>
        <end position="358"/>
    </location>
</feature>
<feature type="region of interest" description="Required for interaction with FASLG and localization to lysosomes" evidence="1">
    <location>
        <begin position="471"/>
        <end position="603"/>
    </location>
</feature>
<feature type="region of interest" description="Disordered" evidence="6">
    <location>
        <begin position="477"/>
        <end position="541"/>
    </location>
</feature>
<feature type="region of interest" description="Interaction with DNM2 and WASL" evidence="8">
    <location>
        <begin position="487"/>
        <end position="543"/>
    </location>
</feature>
<feature type="region of interest" description="Interaction with DNM1 and WASL" evidence="1">
    <location>
        <begin position="532"/>
        <end position="603"/>
    </location>
</feature>
<feature type="region of interest" description="Required for podosome formation" evidence="1">
    <location>
        <begin position="540"/>
        <end position="603"/>
    </location>
</feature>
<feature type="region of interest" description="Interaction with WAS" evidence="1">
    <location>
        <begin position="546"/>
        <end position="603"/>
    </location>
</feature>
<feature type="region of interest" description="Interaction with ARHGAP17, DAAM1, DIAPH1 and DIAPH2" evidence="1">
    <location>
        <begin position="548"/>
        <end position="603"/>
    </location>
</feature>
<feature type="coiled-coil region" evidence="1">
    <location>
        <begin position="67"/>
        <end position="259"/>
    </location>
</feature>
<feature type="coiled-coil region" evidence="1">
    <location>
        <begin position="388"/>
        <end position="481"/>
    </location>
</feature>
<feature type="compositionally biased region" description="Basic residues" evidence="6">
    <location>
        <begin position="316"/>
        <end position="329"/>
    </location>
</feature>
<feature type="compositionally biased region" description="Low complexity" evidence="6">
    <location>
        <begin position="333"/>
        <end position="346"/>
    </location>
</feature>
<feature type="compositionally biased region" description="Low complexity" evidence="6">
    <location>
        <begin position="497"/>
        <end position="510"/>
    </location>
</feature>
<feature type="site" description="Mediates end-to-end attachment of dimers" evidence="1">
    <location>
        <position position="166"/>
    </location>
</feature>
<feature type="modified residue" description="Phosphoserine" evidence="14">
    <location>
        <position position="296"/>
    </location>
</feature>
<feature type="modified residue" description="Phosphoserine" evidence="2">
    <location>
        <position position="298"/>
    </location>
</feature>
<feature type="modified residue" description="Phosphoserine" evidence="2">
    <location>
        <position position="299"/>
    </location>
</feature>
<feature type="modified residue" description="Phosphoserine" evidence="2">
    <location>
        <position position="335"/>
    </location>
</feature>
<feature type="modified residue" description="Phosphoserine" evidence="2">
    <location>
        <position position="351"/>
    </location>
</feature>
<feature type="modified residue" description="Phosphoserine" evidence="2">
    <location>
        <position position="482"/>
    </location>
</feature>
<feature type="splice variant" id="VSP_021722" description="In isoform 3 and isoform 4." evidence="11 12">
    <location>
        <begin position="329"/>
        <end position="384"/>
    </location>
</feature>
<feature type="splice variant" id="VSP_021723" description="In isoform 2 and isoform 4." evidence="10 12">
    <location>
        <position position="515"/>
    </location>
</feature>
<feature type="mutagenesis site" description="Impairs interaction with CDC42 and RHOQ and reduces insulin-stimulated translocation to the plasma membrane." evidence="7">
    <original>I</original>
    <variation>S</variation>
    <location>
        <position position="454"/>
    </location>
</feature>
<feature type="sequence conflict" description="In Ref. 2; AAN38709." evidence="13" ref="2">
    <original>W</original>
    <variation>C</variation>
    <location>
        <position position="321"/>
    </location>
</feature>
<organism>
    <name type="scientific">Mus musculus</name>
    <name type="common">Mouse</name>
    <dbReference type="NCBI Taxonomy" id="10090"/>
    <lineage>
        <taxon>Eukaryota</taxon>
        <taxon>Metazoa</taxon>
        <taxon>Chordata</taxon>
        <taxon>Craniata</taxon>
        <taxon>Vertebrata</taxon>
        <taxon>Euteleostomi</taxon>
        <taxon>Mammalia</taxon>
        <taxon>Eutheria</taxon>
        <taxon>Euarchontoglires</taxon>
        <taxon>Glires</taxon>
        <taxon>Rodentia</taxon>
        <taxon>Myomorpha</taxon>
        <taxon>Muroidea</taxon>
        <taxon>Muridae</taxon>
        <taxon>Murinae</taxon>
        <taxon>Mus</taxon>
        <taxon>Mus</taxon>
    </lineage>
</organism>
<evidence type="ECO:0000250" key="1"/>
<evidence type="ECO:0000250" key="2">
    <source>
        <dbReference type="UniProtKB" id="Q15642"/>
    </source>
</evidence>
<evidence type="ECO:0000255" key="3">
    <source>
        <dbReference type="PROSITE-ProRule" id="PRU00192"/>
    </source>
</evidence>
<evidence type="ECO:0000255" key="4">
    <source>
        <dbReference type="PROSITE-ProRule" id="PRU01077"/>
    </source>
</evidence>
<evidence type="ECO:0000255" key="5">
    <source>
        <dbReference type="PROSITE-ProRule" id="PRU01207"/>
    </source>
</evidence>
<evidence type="ECO:0000256" key="6">
    <source>
        <dbReference type="SAM" id="MobiDB-lite"/>
    </source>
</evidence>
<evidence type="ECO:0000269" key="7">
    <source>
    </source>
</evidence>
<evidence type="ECO:0000269" key="8">
    <source>
    </source>
</evidence>
<evidence type="ECO:0000269" key="9">
    <source>
    </source>
</evidence>
<evidence type="ECO:0000303" key="10">
    <source>
    </source>
</evidence>
<evidence type="ECO:0000303" key="11">
    <source>
    </source>
</evidence>
<evidence type="ECO:0000303" key="12">
    <source>
    </source>
</evidence>
<evidence type="ECO:0000305" key="13"/>
<evidence type="ECO:0007744" key="14">
    <source>
    </source>
</evidence>
<dbReference type="EMBL" id="AY081142">
    <property type="protein sequence ID" value="AAL89589.1"/>
    <property type="molecule type" value="mRNA"/>
</dbReference>
<dbReference type="EMBL" id="AF502565">
    <property type="protein sequence ID" value="AAN38709.1"/>
    <property type="molecule type" value="mRNA"/>
</dbReference>
<dbReference type="EMBL" id="AK088909">
    <property type="protein sequence ID" value="BAC40648.1"/>
    <property type="molecule type" value="mRNA"/>
</dbReference>
<dbReference type="EMBL" id="AK149902">
    <property type="protein sequence ID" value="BAE29155.1"/>
    <property type="molecule type" value="mRNA"/>
</dbReference>
<dbReference type="EMBL" id="BC003249">
    <property type="protein sequence ID" value="AAH03249.1"/>
    <property type="molecule type" value="mRNA"/>
</dbReference>
<dbReference type="CCDS" id="CCDS28930.1">
    <molecule id="Q8CJ53-3"/>
</dbReference>
<dbReference type="CCDS" id="CCDS89129.1">
    <molecule id="Q8CJ53-1"/>
</dbReference>
<dbReference type="CCDS" id="CCDS89130.1">
    <molecule id="Q8CJ53-2"/>
</dbReference>
<dbReference type="CCDS" id="CCDS89131.1">
    <molecule id="Q8CJ53-4"/>
</dbReference>
<dbReference type="RefSeq" id="NP_001229318.1">
    <molecule id="Q8CJ53-1"/>
    <property type="nucleotide sequence ID" value="NM_001242389.2"/>
</dbReference>
<dbReference type="RefSeq" id="NP_001229319.1">
    <molecule id="Q8CJ53-2"/>
    <property type="nucleotide sequence ID" value="NM_001242390.2"/>
</dbReference>
<dbReference type="RefSeq" id="NP_001229320.1">
    <molecule id="Q8CJ53-4"/>
    <property type="nucleotide sequence ID" value="NM_001242391.2"/>
</dbReference>
<dbReference type="RefSeq" id="NP_598886.1">
    <molecule id="Q8CJ53-3"/>
    <property type="nucleotide sequence ID" value="NM_134125.5"/>
</dbReference>
<dbReference type="SMR" id="Q8CJ53"/>
<dbReference type="BioGRID" id="223098">
    <property type="interactions" value="7"/>
</dbReference>
<dbReference type="FunCoup" id="Q8CJ53">
    <property type="interactions" value="1616"/>
</dbReference>
<dbReference type="STRING" id="10090.ENSMUSP00000153467"/>
<dbReference type="iPTMnet" id="Q8CJ53"/>
<dbReference type="PhosphoSitePlus" id="Q8CJ53"/>
<dbReference type="jPOST" id="Q8CJ53"/>
<dbReference type="PaxDb" id="10090-ENSMUSP00000019631"/>
<dbReference type="PeptideAtlas" id="Q8CJ53"/>
<dbReference type="ProteomicsDB" id="283559">
    <molecule id="Q8CJ53-1"/>
</dbReference>
<dbReference type="ProteomicsDB" id="283560">
    <molecule id="Q8CJ53-2"/>
</dbReference>
<dbReference type="ProteomicsDB" id="283561">
    <molecule id="Q8CJ53-3"/>
</dbReference>
<dbReference type="ProteomicsDB" id="283562">
    <molecule id="Q8CJ53-4"/>
</dbReference>
<dbReference type="Pumba" id="Q8CJ53"/>
<dbReference type="Antibodypedia" id="11922">
    <property type="antibodies" value="271 antibodies from 34 providers"/>
</dbReference>
<dbReference type="DNASU" id="106628"/>
<dbReference type="Ensembl" id="ENSMUST00000019631.11">
    <molecule id="Q8CJ53-4"/>
    <property type="protein sequence ID" value="ENSMUSP00000019631.11"/>
    <property type="gene ID" value="ENSMUSG00000019487.12"/>
</dbReference>
<dbReference type="Ensembl" id="ENSMUST00000224152.2">
    <molecule id="Q8CJ53-1"/>
    <property type="protein sequence ID" value="ENSMUSP00000153081.2"/>
    <property type="gene ID" value="ENSMUSG00000019487.12"/>
</dbReference>
<dbReference type="Ensembl" id="ENSMUST00000224885.2">
    <molecule id="Q8CJ53-2"/>
    <property type="protein sequence ID" value="ENSMUSP00000153576.2"/>
    <property type="gene ID" value="ENSMUSG00000019487.12"/>
</dbReference>
<dbReference type="Ensembl" id="ENSMUST00000224947.2">
    <molecule id="Q8CJ53-3"/>
    <property type="protein sequence ID" value="ENSMUSP00000153467.2"/>
    <property type="gene ID" value="ENSMUSG00000019487.12"/>
</dbReference>
<dbReference type="GeneID" id="106628"/>
<dbReference type="KEGG" id="mmu:106628"/>
<dbReference type="UCSC" id="uc008dej.2">
    <molecule id="Q8CJ53-3"/>
    <property type="organism name" value="mouse"/>
</dbReference>
<dbReference type="UCSC" id="uc008dek.2">
    <molecule id="Q8CJ53-1"/>
    <property type="organism name" value="mouse"/>
</dbReference>
<dbReference type="UCSC" id="uc008del.2">
    <molecule id="Q8CJ53-2"/>
    <property type="organism name" value="mouse"/>
</dbReference>
<dbReference type="UCSC" id="uc008dem.2">
    <molecule id="Q8CJ53-4"/>
    <property type="organism name" value="mouse"/>
</dbReference>
<dbReference type="AGR" id="MGI:2146901"/>
<dbReference type="CTD" id="9322"/>
<dbReference type="MGI" id="MGI:2146901">
    <property type="gene designation" value="Trip10"/>
</dbReference>
<dbReference type="VEuPathDB" id="HostDB:ENSMUSG00000019487"/>
<dbReference type="GeneTree" id="ENSGT00950000183047"/>
<dbReference type="HOGENOM" id="CLU_023320_1_0_1"/>
<dbReference type="InParanoid" id="Q8CJ53"/>
<dbReference type="OMA" id="PTSYVKI"/>
<dbReference type="OrthoDB" id="8783038at2759"/>
<dbReference type="PhylomeDB" id="Q8CJ53"/>
<dbReference type="TreeFam" id="TF351162"/>
<dbReference type="Reactome" id="R-MMU-8856828">
    <property type="pathway name" value="Clathrin-mediated endocytosis"/>
</dbReference>
<dbReference type="Reactome" id="R-MMU-9013406">
    <property type="pathway name" value="RHOQ GTPase cycle"/>
</dbReference>
<dbReference type="BioGRID-ORCS" id="106628">
    <property type="hits" value="4 hits in 80 CRISPR screens"/>
</dbReference>
<dbReference type="ChiTaRS" id="Trip10">
    <property type="organism name" value="mouse"/>
</dbReference>
<dbReference type="PRO" id="PR:Q8CJ53"/>
<dbReference type="Proteomes" id="UP000000589">
    <property type="component" value="Chromosome 17"/>
</dbReference>
<dbReference type="RNAct" id="Q8CJ53">
    <property type="molecule type" value="protein"/>
</dbReference>
<dbReference type="Bgee" id="ENSMUSG00000019487">
    <property type="expression patterns" value="Expressed in interventricular septum and 221 other cell types or tissues"/>
</dbReference>
<dbReference type="ExpressionAtlas" id="Q8CJ53">
    <property type="expression patterns" value="baseline and differential"/>
</dbReference>
<dbReference type="GO" id="GO:0005938">
    <property type="term" value="C:cell cortex"/>
    <property type="evidence" value="ECO:0007669"/>
    <property type="project" value="UniProtKB-SubCell"/>
</dbReference>
<dbReference type="GO" id="GO:0042995">
    <property type="term" value="C:cell projection"/>
    <property type="evidence" value="ECO:0007669"/>
    <property type="project" value="UniProtKB-KW"/>
</dbReference>
<dbReference type="GO" id="GO:0005794">
    <property type="term" value="C:Golgi apparatus"/>
    <property type="evidence" value="ECO:0007669"/>
    <property type="project" value="UniProtKB-SubCell"/>
</dbReference>
<dbReference type="GO" id="GO:0005764">
    <property type="term" value="C:lysosome"/>
    <property type="evidence" value="ECO:0007669"/>
    <property type="project" value="UniProtKB-SubCell"/>
</dbReference>
<dbReference type="GO" id="GO:0005874">
    <property type="term" value="C:microtubule"/>
    <property type="evidence" value="ECO:0000304"/>
    <property type="project" value="MGI"/>
</dbReference>
<dbReference type="GO" id="GO:0005654">
    <property type="term" value="C:nucleoplasm"/>
    <property type="evidence" value="ECO:0007669"/>
    <property type="project" value="Ensembl"/>
</dbReference>
<dbReference type="GO" id="GO:0001891">
    <property type="term" value="C:phagocytic cup"/>
    <property type="evidence" value="ECO:0007669"/>
    <property type="project" value="UniProtKB-SubCell"/>
</dbReference>
<dbReference type="GO" id="GO:0042802">
    <property type="term" value="F:identical protein binding"/>
    <property type="evidence" value="ECO:0007669"/>
    <property type="project" value="Ensembl"/>
</dbReference>
<dbReference type="GO" id="GO:0008289">
    <property type="term" value="F:lipid binding"/>
    <property type="evidence" value="ECO:0007669"/>
    <property type="project" value="UniProtKB-KW"/>
</dbReference>
<dbReference type="GO" id="GO:0006897">
    <property type="term" value="P:endocytosis"/>
    <property type="evidence" value="ECO:0007669"/>
    <property type="project" value="UniProtKB-KW"/>
</dbReference>
<dbReference type="GO" id="GO:0007165">
    <property type="term" value="P:signal transduction"/>
    <property type="evidence" value="ECO:0007669"/>
    <property type="project" value="InterPro"/>
</dbReference>
<dbReference type="CDD" id="cd07653">
    <property type="entry name" value="F-BAR_CIP4-like"/>
    <property type="match status" value="1"/>
</dbReference>
<dbReference type="CDD" id="cd11628">
    <property type="entry name" value="HR1_CIP4_FNBP1L"/>
    <property type="match status" value="1"/>
</dbReference>
<dbReference type="CDD" id="cd11911">
    <property type="entry name" value="SH3_CIP4-like"/>
    <property type="match status" value="1"/>
</dbReference>
<dbReference type="FunFam" id="1.20.1270.60:FF:000002">
    <property type="entry name" value="Formin-binding protein 1-like isoform 1"/>
    <property type="match status" value="1"/>
</dbReference>
<dbReference type="FunFam" id="2.30.30.40:FF:000017">
    <property type="entry name" value="Formin-binding protein 1-like isoform 1"/>
    <property type="match status" value="1"/>
</dbReference>
<dbReference type="Gene3D" id="6.10.140.470">
    <property type="match status" value="1"/>
</dbReference>
<dbReference type="Gene3D" id="1.20.1270.60">
    <property type="entry name" value="Arfaptin homology (AH) domain/BAR domain"/>
    <property type="match status" value="1"/>
</dbReference>
<dbReference type="Gene3D" id="2.30.30.40">
    <property type="entry name" value="SH3 Domains"/>
    <property type="match status" value="1"/>
</dbReference>
<dbReference type="InterPro" id="IPR027267">
    <property type="entry name" value="AH/BAR_dom_sf"/>
</dbReference>
<dbReference type="InterPro" id="IPR031160">
    <property type="entry name" value="F_BAR"/>
</dbReference>
<dbReference type="InterPro" id="IPR001060">
    <property type="entry name" value="FCH_dom"/>
</dbReference>
<dbReference type="InterPro" id="IPR011072">
    <property type="entry name" value="HR1_rho-bd"/>
</dbReference>
<dbReference type="InterPro" id="IPR036028">
    <property type="entry name" value="SH3-like_dom_sf"/>
</dbReference>
<dbReference type="InterPro" id="IPR001452">
    <property type="entry name" value="SH3_domain"/>
</dbReference>
<dbReference type="PANTHER" id="PTHR15735:SF17">
    <property type="entry name" value="CDC42-INTERACTING PROTEIN 4"/>
    <property type="match status" value="1"/>
</dbReference>
<dbReference type="PANTHER" id="PTHR15735">
    <property type="entry name" value="FCH AND DOUBLE SH3 DOMAINS PROTEIN"/>
    <property type="match status" value="1"/>
</dbReference>
<dbReference type="Pfam" id="PF00611">
    <property type="entry name" value="FCH"/>
    <property type="match status" value="1"/>
</dbReference>
<dbReference type="Pfam" id="PF00018">
    <property type="entry name" value="SH3_1"/>
    <property type="match status" value="1"/>
</dbReference>
<dbReference type="SMART" id="SM00055">
    <property type="entry name" value="FCH"/>
    <property type="match status" value="1"/>
</dbReference>
<dbReference type="SMART" id="SM00326">
    <property type="entry name" value="SH3"/>
    <property type="match status" value="1"/>
</dbReference>
<dbReference type="SUPFAM" id="SSF103657">
    <property type="entry name" value="BAR/IMD domain-like"/>
    <property type="match status" value="1"/>
</dbReference>
<dbReference type="SUPFAM" id="SSF50044">
    <property type="entry name" value="SH3-domain"/>
    <property type="match status" value="1"/>
</dbReference>
<dbReference type="PROSITE" id="PS51741">
    <property type="entry name" value="F_BAR"/>
    <property type="match status" value="1"/>
</dbReference>
<dbReference type="PROSITE" id="PS51860">
    <property type="entry name" value="REM_1"/>
    <property type="match status" value="1"/>
</dbReference>
<dbReference type="PROSITE" id="PS50002">
    <property type="entry name" value="SH3"/>
    <property type="match status" value="1"/>
</dbReference>
<sequence>MDWGTELWDQFEVLERHTQWGLDLLDKYVKFVKERAEVEQAYAKQLRSLVKKYLPKRPTKDDPEVKFSQQQSFVQLLQEVNDFAGQRELVAESLGIRVCLELAKYSQEMKQERKMHFQEGRRAQQQLENGFKQLENSKRKFERDCREAEKAAHTAERLDQDINATKADVEKAKQQAHLRNHMAEESKNEYAAQLQRFNRDQAHFYFSQMPQIFDKLQDMDERRATRLGAGYGLLSEAELQVVPIIGKCLEGMKVAAESVDAKNDSQVLIELHKSGFARPGDLEFEDFSQVINRVPSDSSLGTPDGRPELRAASSRSRAKRWPFGKKNKPRPPSLSLLGGHLPSTLSDGPSSPRSGRDPLAILSEISKSVKPRLASFRSFRGGRGTVATEDFSHLPPEQQRKRLQQQLEERNRELQKEEDQREALKKMKDVYEKTPQMGDPASLEPRIAETLGNIERLKLEVQKYEAWLAEAESRVLSNRGDSLSRHARPPDPPTTAPPDSSSSSTNSGSQDNKESSSEEPPSEGQDTPIYTEFDEDFEEPASPIGQCVAIYHFEGSSEGTVSMSEGEDLSLMEEDKGDGWTRVRRKQGAEGYVPTSYLRVTLN</sequence>
<protein>
    <recommendedName>
        <fullName>Cdc42-interacting protein 4</fullName>
    </recommendedName>
    <alternativeName>
        <fullName>Thyroid receptor-interacting protein 10</fullName>
        <shortName>TR-interacting protein 10</shortName>
        <shortName>TRIP-10</shortName>
    </alternativeName>
</protein>
<proteinExistence type="evidence at protein level"/>
<reference key="1">
    <citation type="journal article" date="2002" name="Biochem. Biophys. Res. Commun.">
        <title>Identification and genetic analysis of human and mouse activated Cdc42 interacting protein-4 isoforms.</title>
        <authorList>
            <person name="Wang L."/>
            <person name="Rudert W.A."/>
            <person name="Grishin A."/>
            <person name="Dombrosky-Ferlan P."/>
            <person name="Sullivan K."/>
            <person name="Deng X."/>
            <person name="Whitcomb D."/>
            <person name="Corey S.J."/>
        </authorList>
    </citation>
    <scope>NUCLEOTIDE SEQUENCE [MRNA] (ISOFORM 2)</scope>
    <source>
        <strain>C57BL/6J</strain>
        <tissue>Heart</tissue>
    </source>
</reference>
<reference key="2">
    <citation type="journal article" date="2002" name="Proc. Natl. Acad. Sci. U.S.A.">
        <title>The TC10-interacting protein CIP4/2 is required for insulin-stimulated Glut4 translocation in 3T3L1 adipocytes.</title>
        <authorList>
            <person name="Chang L."/>
            <person name="Adams R.D."/>
            <person name="Saltiel A.R."/>
        </authorList>
    </citation>
    <scope>NUCLEOTIDE SEQUENCE [MRNA] (ISOFORM 1)</scope>
    <scope>FUNCTION</scope>
    <scope>INTERACTION WITH CDC42 AND RHOQ</scope>
    <scope>SUBCELLULAR LOCATION</scope>
    <scope>MUTAGENESIS OF ILE-454</scope>
    <source>
        <tissue>Adipocyte</tissue>
    </source>
</reference>
<reference key="3">
    <citation type="journal article" date="2005" name="Science">
        <title>The transcriptional landscape of the mammalian genome.</title>
        <authorList>
            <person name="Carninci P."/>
            <person name="Kasukawa T."/>
            <person name="Katayama S."/>
            <person name="Gough J."/>
            <person name="Frith M.C."/>
            <person name="Maeda N."/>
            <person name="Oyama R."/>
            <person name="Ravasi T."/>
            <person name="Lenhard B."/>
            <person name="Wells C."/>
            <person name="Kodzius R."/>
            <person name="Shimokawa K."/>
            <person name="Bajic V.B."/>
            <person name="Brenner S.E."/>
            <person name="Batalov S."/>
            <person name="Forrest A.R."/>
            <person name="Zavolan M."/>
            <person name="Davis M.J."/>
            <person name="Wilming L.G."/>
            <person name="Aidinis V."/>
            <person name="Allen J.E."/>
            <person name="Ambesi-Impiombato A."/>
            <person name="Apweiler R."/>
            <person name="Aturaliya R.N."/>
            <person name="Bailey T.L."/>
            <person name="Bansal M."/>
            <person name="Baxter L."/>
            <person name="Beisel K.W."/>
            <person name="Bersano T."/>
            <person name="Bono H."/>
            <person name="Chalk A.M."/>
            <person name="Chiu K.P."/>
            <person name="Choudhary V."/>
            <person name="Christoffels A."/>
            <person name="Clutterbuck D.R."/>
            <person name="Crowe M.L."/>
            <person name="Dalla E."/>
            <person name="Dalrymple B.P."/>
            <person name="de Bono B."/>
            <person name="Della Gatta G."/>
            <person name="di Bernardo D."/>
            <person name="Down T."/>
            <person name="Engstrom P."/>
            <person name="Fagiolini M."/>
            <person name="Faulkner G."/>
            <person name="Fletcher C.F."/>
            <person name="Fukushima T."/>
            <person name="Furuno M."/>
            <person name="Futaki S."/>
            <person name="Gariboldi M."/>
            <person name="Georgii-Hemming P."/>
            <person name="Gingeras T.R."/>
            <person name="Gojobori T."/>
            <person name="Green R.E."/>
            <person name="Gustincich S."/>
            <person name="Harbers M."/>
            <person name="Hayashi Y."/>
            <person name="Hensch T.K."/>
            <person name="Hirokawa N."/>
            <person name="Hill D."/>
            <person name="Huminiecki L."/>
            <person name="Iacono M."/>
            <person name="Ikeo K."/>
            <person name="Iwama A."/>
            <person name="Ishikawa T."/>
            <person name="Jakt M."/>
            <person name="Kanapin A."/>
            <person name="Katoh M."/>
            <person name="Kawasawa Y."/>
            <person name="Kelso J."/>
            <person name="Kitamura H."/>
            <person name="Kitano H."/>
            <person name="Kollias G."/>
            <person name="Krishnan S.P."/>
            <person name="Kruger A."/>
            <person name="Kummerfeld S.K."/>
            <person name="Kurochkin I.V."/>
            <person name="Lareau L.F."/>
            <person name="Lazarevic D."/>
            <person name="Lipovich L."/>
            <person name="Liu J."/>
            <person name="Liuni S."/>
            <person name="McWilliam S."/>
            <person name="Madan Babu M."/>
            <person name="Madera M."/>
            <person name="Marchionni L."/>
            <person name="Matsuda H."/>
            <person name="Matsuzawa S."/>
            <person name="Miki H."/>
            <person name="Mignone F."/>
            <person name="Miyake S."/>
            <person name="Morris K."/>
            <person name="Mottagui-Tabar S."/>
            <person name="Mulder N."/>
            <person name="Nakano N."/>
            <person name="Nakauchi H."/>
            <person name="Ng P."/>
            <person name="Nilsson R."/>
            <person name="Nishiguchi S."/>
            <person name="Nishikawa S."/>
            <person name="Nori F."/>
            <person name="Ohara O."/>
            <person name="Okazaki Y."/>
            <person name="Orlando V."/>
            <person name="Pang K.C."/>
            <person name="Pavan W.J."/>
            <person name="Pavesi G."/>
            <person name="Pesole G."/>
            <person name="Petrovsky N."/>
            <person name="Piazza S."/>
            <person name="Reed J."/>
            <person name="Reid J.F."/>
            <person name="Ring B.Z."/>
            <person name="Ringwald M."/>
            <person name="Rost B."/>
            <person name="Ruan Y."/>
            <person name="Salzberg S.L."/>
            <person name="Sandelin A."/>
            <person name="Schneider C."/>
            <person name="Schoenbach C."/>
            <person name="Sekiguchi K."/>
            <person name="Semple C.A."/>
            <person name="Seno S."/>
            <person name="Sessa L."/>
            <person name="Sheng Y."/>
            <person name="Shibata Y."/>
            <person name="Shimada H."/>
            <person name="Shimada K."/>
            <person name="Silva D."/>
            <person name="Sinclair B."/>
            <person name="Sperling S."/>
            <person name="Stupka E."/>
            <person name="Sugiura K."/>
            <person name="Sultana R."/>
            <person name="Takenaka Y."/>
            <person name="Taki K."/>
            <person name="Tammoja K."/>
            <person name="Tan S.L."/>
            <person name="Tang S."/>
            <person name="Taylor M.S."/>
            <person name="Tegner J."/>
            <person name="Teichmann S.A."/>
            <person name="Ueda H.R."/>
            <person name="van Nimwegen E."/>
            <person name="Verardo R."/>
            <person name="Wei C.L."/>
            <person name="Yagi K."/>
            <person name="Yamanishi H."/>
            <person name="Zabarovsky E."/>
            <person name="Zhu S."/>
            <person name="Zimmer A."/>
            <person name="Hide W."/>
            <person name="Bult C."/>
            <person name="Grimmond S.M."/>
            <person name="Teasdale R.D."/>
            <person name="Liu E.T."/>
            <person name="Brusic V."/>
            <person name="Quackenbush J."/>
            <person name="Wahlestedt C."/>
            <person name="Mattick J.S."/>
            <person name="Hume D.A."/>
            <person name="Kai C."/>
            <person name="Sasaki D."/>
            <person name="Tomaru Y."/>
            <person name="Fukuda S."/>
            <person name="Kanamori-Katayama M."/>
            <person name="Suzuki M."/>
            <person name="Aoki J."/>
            <person name="Arakawa T."/>
            <person name="Iida J."/>
            <person name="Imamura K."/>
            <person name="Itoh M."/>
            <person name="Kato T."/>
            <person name="Kawaji H."/>
            <person name="Kawagashira N."/>
            <person name="Kawashima T."/>
            <person name="Kojima M."/>
            <person name="Kondo S."/>
            <person name="Konno H."/>
            <person name="Nakano K."/>
            <person name="Ninomiya N."/>
            <person name="Nishio T."/>
            <person name="Okada M."/>
            <person name="Plessy C."/>
            <person name="Shibata K."/>
            <person name="Shiraki T."/>
            <person name="Suzuki S."/>
            <person name="Tagami M."/>
            <person name="Waki K."/>
            <person name="Watahiki A."/>
            <person name="Okamura-Oho Y."/>
            <person name="Suzuki H."/>
            <person name="Kawai J."/>
            <person name="Hayashizaki Y."/>
        </authorList>
    </citation>
    <scope>NUCLEOTIDE SEQUENCE [LARGE SCALE MRNA] (ISOFORM 4)</scope>
    <source>
        <strain>C57BL/6J</strain>
        <strain>NOD</strain>
        <tissue>Bone marrow</tissue>
        <tissue>Thymus</tissue>
    </source>
</reference>
<reference key="4">
    <citation type="journal article" date="2004" name="Genome Res.">
        <title>The status, quality, and expansion of the NIH full-length cDNA project: the Mammalian Gene Collection (MGC).</title>
        <authorList>
            <consortium name="The MGC Project Team"/>
        </authorList>
    </citation>
    <scope>NUCLEOTIDE SEQUENCE [LARGE SCALE MRNA] (ISOFORM 3)</scope>
    <source>
        <strain>FVB/N</strain>
        <tissue>Mammary gland</tissue>
    </source>
</reference>
<reference key="5">
    <citation type="submission" date="2009-01" db="UniProtKB">
        <authorList>
            <person name="Lubec G."/>
            <person name="Sunyer B."/>
            <person name="Chen W.-Q."/>
        </authorList>
    </citation>
    <scope>PROTEIN SEQUENCE OF 98-104</scope>
    <scope>IDENTIFICATION BY MASS SPECTROMETRY</scope>
    <source>
        <strain>OF1</strain>
        <tissue>Hippocampus</tissue>
    </source>
</reference>
<reference key="6">
    <citation type="journal article" date="2006" name="Biochem. Biophys. Res. Commun.">
        <title>The cytoskeletal organizing protein Cdc42-interacting protein 4 associates with phosphorylase kinase in skeletal muscle.</title>
        <authorList>
            <person name="Archila S."/>
            <person name="King M.A."/>
            <person name="Carlson G.M."/>
            <person name="Rice N.A."/>
        </authorList>
    </citation>
    <scope>SUBCELLULAR LOCATION</scope>
</reference>
<reference key="7">
    <citation type="journal article" date="2006" name="J. Cell Biol.">
        <title>Coordination between the actin cytoskeleton and membrane deformation by a novel membrane tubulation domain of PCH proteins is involved in endocytosis.</title>
        <authorList>
            <person name="Tsujita K."/>
            <person name="Suetsugu S."/>
            <person name="Sasaki N."/>
            <person name="Furutani M."/>
            <person name="Oikawa T."/>
            <person name="Takenawa T."/>
        </authorList>
    </citation>
    <scope>FUNCTION</scope>
    <scope>INTERACTION WITH DNM2 AND WASL</scope>
    <scope>SUBCELLULAR LOCATION</scope>
</reference>
<reference key="8">
    <citation type="journal article" date="2007" name="Cell Metab.">
        <title>Gapex-5, a Rab31 guanine nucleotide exchange factor that regulates Glut4 trafficking in adipocytes.</title>
        <authorList>
            <person name="Lodhi I.J."/>
            <person name="Chiang S.-H."/>
            <person name="Chang L."/>
            <person name="Vollenweider D."/>
            <person name="Watson R.T."/>
            <person name="Inoue M."/>
            <person name="Pessin J.E."/>
            <person name="Saltiel A.R."/>
        </authorList>
    </citation>
    <scope>INTERACTION WITH GAPVD1</scope>
</reference>
<reference key="9">
    <citation type="journal article" date="2010" name="Cell">
        <title>A tissue-specific atlas of mouse protein phosphorylation and expression.</title>
        <authorList>
            <person name="Huttlin E.L."/>
            <person name="Jedrychowski M.P."/>
            <person name="Elias J.E."/>
            <person name="Goswami T."/>
            <person name="Rad R."/>
            <person name="Beausoleil S.A."/>
            <person name="Villen J."/>
            <person name="Haas W."/>
            <person name="Sowa M.E."/>
            <person name="Gygi S.P."/>
        </authorList>
    </citation>
    <scope>PHOSPHORYLATION [LARGE SCALE ANALYSIS] AT SER-296</scope>
    <scope>IDENTIFICATION BY MASS SPECTROMETRY [LARGE SCALE ANALYSIS]</scope>
    <source>
        <tissue>Brown adipose tissue</tissue>
        <tissue>Heart</tissue>
        <tissue>Kidney</tissue>
        <tissue>Lung</tissue>
        <tissue>Pancreas</tissue>
        <tissue>Spleen</tissue>
        <tissue>Testis</tissue>
    </source>
</reference>
<accession>Q8CJ53</accession>
<accession>Q8BTR8</accession>
<accession>Q8R433</accession>
<accession>Q99LI0</accession>
<comment type="function">
    <text evidence="1 7 8">Required to coordinate membrane tubulation with reorganization of the actin cytoskeleton during endocytosis. Binds to lipids such as phosphatidylinositol 4,5-bisphosphate and phosphatidylserine and promotes membrane invagination and the formation of tubules. Also promotes CDC42-induced actin polymerization by recruiting WASL/N-WASP which in turn activates the Arp2/3 complex. Actin polymerization may promote the fission of membrane tubules to form endocytic vesicles. Required for the formation of podosomes, actin-rich adhesion structures specific to monocyte-derived cells. May be required for the lysosomal retention of FASLG/FASL (By similarity). Required for translocation of GLUT4 to the plasma membrane in response to insulin signaling.</text>
</comment>
<comment type="subunit">
    <text evidence="1 7 8 9">Homodimerizes, the dimers can polymerize end-to-end to form filamentous structures (By similarity). Interacts with AKAP9, ARHGAP17, DAAM1, DIAPH1, DIAPH2, DNM1, FASLG/FASL, GAPVD1, LYN, microtubules, PDE6G, SRC and WAS/WASP. Interacts with the ligand binding domain of the thyroid receptor (TR) in the presence of thyroid hormone. May interact with CTNNB1 and HD/HTT (By similarity). Interacts specifically with GTP-bound CDC42 and RHOQ. Interacts with DNM2 and WASL.</text>
</comment>
<comment type="subcellular location">
    <subcellularLocation>
        <location>Cytoplasm</location>
        <location>Cytoskeleton</location>
    </subcellularLocation>
    <subcellularLocation>
        <location>Cytoplasm</location>
        <location>Cell cortex</location>
    </subcellularLocation>
    <subcellularLocation>
        <location>Lysosome</location>
    </subcellularLocation>
    <subcellularLocation>
        <location evidence="1">Golgi apparatus</location>
    </subcellularLocation>
    <subcellularLocation>
        <location>Cell membrane</location>
    </subcellularLocation>
    <subcellularLocation>
        <location evidence="1">Cell projection</location>
        <location evidence="1">Phagocytic cup</location>
    </subcellularLocation>
    <text evidence="1">Localizes to cortical regions coincident with F-actin, to lysosomes and to sites of phagocytosis in macrophages. Also localizes to the Golgi, and this requires AKAP9 (By similarity). Translocates to the plasma membrane in response to insulin stimulation, and this may require active RHOQ.</text>
</comment>
<comment type="alternative products">
    <event type="alternative splicing"/>
    <isoform>
        <id>Q8CJ53-1</id>
        <name>1</name>
        <name>Cip4/2</name>
        <sequence type="displayed"/>
    </isoform>
    <isoform>
        <id>Q8CJ53-2</id>
        <name>2</name>
        <name>H</name>
        <sequence type="described" ref="VSP_021723"/>
    </isoform>
    <isoform>
        <id>Q8CJ53-3</id>
        <name>3</name>
        <sequence type="described" ref="VSP_021722"/>
    </isoform>
    <isoform>
        <id>Q8CJ53-4</id>
        <name>4</name>
        <sequence type="described" ref="VSP_021722 VSP_021723"/>
    </isoform>
</comment>
<comment type="domain">
    <text evidence="1">The F-BAR domain binds the phospholipid membrane with its concave surface. The end-to-end polymerization of dimers of these domains provides a curved surface that fits best membranes with around 600 A diameter, and may drive tubulation (By similarity).</text>
</comment>
<comment type="PTM">
    <text evidence="1">Tyrosine phosphorylated. Also phosphorylated by PKA (By similarity).</text>
</comment>
<comment type="similarity">
    <text evidence="13">Belongs to the FNBP1 family.</text>
</comment>
<name>CIP4_MOUSE</name>
<gene>
    <name type="primary">Trip10</name>
    <name type="synonym">Cip4</name>
</gene>
<keyword id="KW-0025">Alternative splicing</keyword>
<keyword id="KW-1003">Cell membrane</keyword>
<keyword id="KW-0966">Cell projection</keyword>
<keyword id="KW-0175">Coiled coil</keyword>
<keyword id="KW-0963">Cytoplasm</keyword>
<keyword id="KW-0206">Cytoskeleton</keyword>
<keyword id="KW-0903">Direct protein sequencing</keyword>
<keyword id="KW-0254">Endocytosis</keyword>
<keyword id="KW-0333">Golgi apparatus</keyword>
<keyword id="KW-0446">Lipid-binding</keyword>
<keyword id="KW-0458">Lysosome</keyword>
<keyword id="KW-0472">Membrane</keyword>
<keyword id="KW-0597">Phosphoprotein</keyword>
<keyword id="KW-1185">Reference proteome</keyword>
<keyword id="KW-0728">SH3 domain</keyword>